<organism>
    <name type="scientific">Mus musculus</name>
    <name type="common">Mouse</name>
    <dbReference type="NCBI Taxonomy" id="10090"/>
    <lineage>
        <taxon>Eukaryota</taxon>
        <taxon>Metazoa</taxon>
        <taxon>Chordata</taxon>
        <taxon>Craniata</taxon>
        <taxon>Vertebrata</taxon>
        <taxon>Euteleostomi</taxon>
        <taxon>Mammalia</taxon>
        <taxon>Eutheria</taxon>
        <taxon>Euarchontoglires</taxon>
        <taxon>Glires</taxon>
        <taxon>Rodentia</taxon>
        <taxon>Myomorpha</taxon>
        <taxon>Muroidea</taxon>
        <taxon>Muridae</taxon>
        <taxon>Murinae</taxon>
        <taxon>Mus</taxon>
        <taxon>Mus</taxon>
    </lineage>
</organism>
<keyword id="KW-0002">3D-structure</keyword>
<keyword id="KW-0053">Apoptosis</keyword>
<keyword id="KW-1003">Cell membrane</keyword>
<keyword id="KW-0325">Glycoprotein</keyword>
<keyword id="KW-0472">Membrane</keyword>
<keyword id="KW-0539">Nucleus</keyword>
<keyword id="KW-1185">Reference proteome</keyword>
<keyword id="KW-0812">Transmembrane</keyword>
<keyword id="KW-1133">Transmembrane helix</keyword>
<feature type="chain" id="PRO_0000415383" description="Death domain-containing membrane protein NRADD">
    <location>
        <begin position="1"/>
        <end position="228"/>
    </location>
</feature>
<feature type="topological domain" description="Extracellular" evidence="9">
    <location>
        <begin position="1"/>
        <end position="52"/>
    </location>
</feature>
<feature type="transmembrane region" description="Helical; Signal-anchor for type III membrane protein" evidence="1">
    <location>
        <begin position="53"/>
        <end position="73"/>
    </location>
</feature>
<feature type="topological domain" description="Cytoplasmic" evidence="9">
    <location>
        <begin position="74"/>
        <end position="228"/>
    </location>
</feature>
<feature type="domain" description="Death" evidence="2">
    <location>
        <begin position="143"/>
        <end position="222"/>
    </location>
</feature>
<feature type="region of interest" description="Disordered" evidence="3">
    <location>
        <begin position="87"/>
        <end position="122"/>
    </location>
</feature>
<feature type="compositionally biased region" description="Basic and acidic residues" evidence="3">
    <location>
        <begin position="90"/>
        <end position="105"/>
    </location>
</feature>
<feature type="glycosylation site" description="N-linked (GlcNAc...) asparagine" evidence="8">
    <location>
        <position position="4"/>
    </location>
</feature>
<feature type="glycosylation site" description="N-linked (GlcNAc...) asparagine" evidence="1">
    <location>
        <position position="37"/>
    </location>
</feature>
<feature type="sequence conflict" description="In Ref. 2; BAE35698." evidence="9" ref="2">
    <original>P</original>
    <variation>H</variation>
    <location>
        <position position="121"/>
    </location>
</feature>
<feature type="strand" evidence="11">
    <location>
        <begin position="134"/>
        <end position="136"/>
    </location>
</feature>
<feature type="helix" evidence="10">
    <location>
        <begin position="140"/>
        <end position="143"/>
    </location>
</feature>
<feature type="helix" evidence="10">
    <location>
        <begin position="146"/>
        <end position="149"/>
    </location>
</feature>
<feature type="helix" evidence="10">
    <location>
        <begin position="158"/>
        <end position="165"/>
    </location>
</feature>
<feature type="helix" evidence="10">
    <location>
        <begin position="169"/>
        <end position="175"/>
    </location>
</feature>
<feature type="helix" evidence="10">
    <location>
        <begin position="181"/>
        <end position="188"/>
    </location>
</feature>
<feature type="strand" evidence="10">
    <location>
        <begin position="191"/>
        <end position="195"/>
    </location>
</feature>
<feature type="helix" evidence="10">
    <location>
        <begin position="201"/>
        <end position="207"/>
    </location>
</feature>
<feature type="turn" evidence="10">
    <location>
        <begin position="208"/>
        <end position="210"/>
    </location>
</feature>
<feature type="helix" evidence="10">
    <location>
        <begin position="212"/>
        <end position="218"/>
    </location>
</feature>
<dbReference type="EMBL" id="AF534394">
    <property type="protein sequence ID" value="AAN05631.1"/>
    <property type="molecule type" value="mRNA"/>
</dbReference>
<dbReference type="EMBL" id="AK160222">
    <property type="protein sequence ID" value="BAE35698.1"/>
    <property type="molecule type" value="mRNA"/>
</dbReference>
<dbReference type="EMBL" id="AC132103">
    <property type="status" value="NOT_ANNOTATED_CDS"/>
    <property type="molecule type" value="Genomic_DNA"/>
</dbReference>
<dbReference type="EMBL" id="BC069856">
    <property type="protein sequence ID" value="AAH69856.1"/>
    <property type="molecule type" value="mRNA"/>
</dbReference>
<dbReference type="CCDS" id="CCDS23569.1"/>
<dbReference type="RefSeq" id="NP_080288.1">
    <property type="nucleotide sequence ID" value="NM_026012.2"/>
</dbReference>
<dbReference type="PDB" id="2IB1">
    <property type="method" value="NMR"/>
    <property type="chains" value="A=138-228"/>
</dbReference>
<dbReference type="PDB" id="6HJ7">
    <property type="method" value="NMR"/>
    <property type="chains" value="A=127-228"/>
</dbReference>
<dbReference type="PDBsum" id="2IB1"/>
<dbReference type="PDBsum" id="6HJ7"/>
<dbReference type="SMR" id="Q8CJ26"/>
<dbReference type="FunCoup" id="Q8CJ26">
    <property type="interactions" value="17"/>
</dbReference>
<dbReference type="IntAct" id="Q8CJ26">
    <property type="interactions" value="2"/>
</dbReference>
<dbReference type="MINT" id="Q8CJ26"/>
<dbReference type="STRING" id="10090.ENSMUSP00000035069"/>
<dbReference type="GlyCosmos" id="Q8CJ26">
    <property type="glycosylation" value="2 sites, No reported glycans"/>
</dbReference>
<dbReference type="GlyGen" id="Q8CJ26">
    <property type="glycosylation" value="2 sites"/>
</dbReference>
<dbReference type="iPTMnet" id="Q8CJ26"/>
<dbReference type="PhosphoSitePlus" id="Q8CJ26"/>
<dbReference type="SwissPalm" id="Q8CJ26"/>
<dbReference type="PaxDb" id="10090-ENSMUSP00000035069"/>
<dbReference type="PeptideAtlas" id="Q8CJ26"/>
<dbReference type="ProteomicsDB" id="293724"/>
<dbReference type="Pumba" id="Q8CJ26"/>
<dbReference type="DNASU" id="67169"/>
<dbReference type="Ensembl" id="ENSMUST00000035069.14">
    <property type="protein sequence ID" value="ENSMUSP00000035069.10"/>
    <property type="gene ID" value="ENSMUSG00000032491.15"/>
</dbReference>
<dbReference type="GeneID" id="67169"/>
<dbReference type="KEGG" id="mmu:67169"/>
<dbReference type="UCSC" id="uc009ruk.1">
    <property type="organism name" value="mouse"/>
</dbReference>
<dbReference type="AGR" id="MGI:1914419"/>
<dbReference type="CTD" id="67169"/>
<dbReference type="MGI" id="MGI:1914419">
    <property type="gene designation" value="Nradd"/>
</dbReference>
<dbReference type="VEuPathDB" id="HostDB:ENSMUSG00000032491"/>
<dbReference type="eggNOG" id="ENOG502QRGT">
    <property type="taxonomic scope" value="Eukaryota"/>
</dbReference>
<dbReference type="GeneTree" id="ENSGT00940000163571"/>
<dbReference type="HOGENOM" id="CLU_1229566_0_0_1"/>
<dbReference type="InParanoid" id="Q8CJ26"/>
<dbReference type="OMA" id="MVHVDKT"/>
<dbReference type="OrthoDB" id="10061577at2759"/>
<dbReference type="PhylomeDB" id="Q8CJ26"/>
<dbReference type="TreeFam" id="TF106466"/>
<dbReference type="BioGRID-ORCS" id="67169">
    <property type="hits" value="0 hits in 77 CRISPR screens"/>
</dbReference>
<dbReference type="EvolutionaryTrace" id="Q8CJ26"/>
<dbReference type="PRO" id="PR:Q8CJ26"/>
<dbReference type="Proteomes" id="UP000000589">
    <property type="component" value="Chromosome 9"/>
</dbReference>
<dbReference type="RNAct" id="Q8CJ26">
    <property type="molecule type" value="protein"/>
</dbReference>
<dbReference type="Bgee" id="ENSMUSG00000032491">
    <property type="expression patterns" value="Expressed in lip and 156 other cell types or tissues"/>
</dbReference>
<dbReference type="ExpressionAtlas" id="Q8CJ26">
    <property type="expression patterns" value="baseline and differential"/>
</dbReference>
<dbReference type="GO" id="GO:0030027">
    <property type="term" value="C:lamellipodium"/>
    <property type="evidence" value="ECO:0000314"/>
    <property type="project" value="MGI"/>
</dbReference>
<dbReference type="GO" id="GO:0016020">
    <property type="term" value="C:membrane"/>
    <property type="evidence" value="ECO:0000314"/>
    <property type="project" value="MGI"/>
</dbReference>
<dbReference type="GO" id="GO:0005641">
    <property type="term" value="C:nuclear envelope lumen"/>
    <property type="evidence" value="ECO:0000314"/>
    <property type="project" value="MGI"/>
</dbReference>
<dbReference type="GO" id="GO:0005634">
    <property type="term" value="C:nucleus"/>
    <property type="evidence" value="ECO:0000314"/>
    <property type="project" value="MGI"/>
</dbReference>
<dbReference type="GO" id="GO:0005886">
    <property type="term" value="C:plasma membrane"/>
    <property type="evidence" value="ECO:0007669"/>
    <property type="project" value="UniProtKB-SubCell"/>
</dbReference>
<dbReference type="GO" id="GO:0006915">
    <property type="term" value="P:apoptotic process"/>
    <property type="evidence" value="ECO:0007669"/>
    <property type="project" value="UniProtKB-KW"/>
</dbReference>
<dbReference type="GO" id="GO:0007165">
    <property type="term" value="P:signal transduction"/>
    <property type="evidence" value="ECO:0007669"/>
    <property type="project" value="InterPro"/>
</dbReference>
<dbReference type="CDD" id="cd08311">
    <property type="entry name" value="Death_p75NR"/>
    <property type="match status" value="1"/>
</dbReference>
<dbReference type="FunFam" id="1.10.533.10:FF:000140">
    <property type="entry name" value="Death domain-containing membrane protein NRADD"/>
    <property type="match status" value="1"/>
</dbReference>
<dbReference type="Gene3D" id="6.10.250.1780">
    <property type="match status" value="1"/>
</dbReference>
<dbReference type="Gene3D" id="1.10.533.10">
    <property type="entry name" value="Death Domain, Fas"/>
    <property type="match status" value="1"/>
</dbReference>
<dbReference type="InterPro" id="IPR011029">
    <property type="entry name" value="DEATH-like_dom_sf"/>
</dbReference>
<dbReference type="InterPro" id="IPR000488">
    <property type="entry name" value="Death_dom"/>
</dbReference>
<dbReference type="InterPro" id="IPR052302">
    <property type="entry name" value="Neurotrophin_rcpt-DD"/>
</dbReference>
<dbReference type="InterPro" id="IPR041448">
    <property type="entry name" value="TNFR16_TM"/>
</dbReference>
<dbReference type="PANTHER" id="PTHR46605:SF1">
    <property type="entry name" value="DEATH DOMAIN-CONTAINING MEMBRANE PROTEIN NRADD"/>
    <property type="match status" value="1"/>
</dbReference>
<dbReference type="PANTHER" id="PTHR46605">
    <property type="entry name" value="TUMOR NECROSIS FACTOR RECEPTOR"/>
    <property type="match status" value="1"/>
</dbReference>
<dbReference type="Pfam" id="PF00531">
    <property type="entry name" value="Death"/>
    <property type="match status" value="1"/>
</dbReference>
<dbReference type="Pfam" id="PF18422">
    <property type="entry name" value="TNFR_16_TM"/>
    <property type="match status" value="1"/>
</dbReference>
<dbReference type="SMART" id="SM00005">
    <property type="entry name" value="DEATH"/>
    <property type="match status" value="1"/>
</dbReference>
<dbReference type="SUPFAM" id="SSF47986">
    <property type="entry name" value="DEATH domain"/>
    <property type="match status" value="1"/>
</dbReference>
<dbReference type="PROSITE" id="PS50017">
    <property type="entry name" value="DEATH_DOMAIN"/>
    <property type="match status" value="1"/>
</dbReference>
<comment type="function">
    <text evidence="4 5 7">Modulates NTRK1 signaling. Can activate several intracellular signaling pathways, leading to activation of JUN. Promotes apoptosis. Promotes translocation of SORT1 to the cell membrane, and thereby hinders lysosomal degradation of SOTR1 and promotes its interaction with NGFR.</text>
</comment>
<comment type="subunit">
    <text evidence="6 7">Interacts with NGFR. Interacts with NTRK1. Interacts with SORT1.</text>
</comment>
<comment type="interaction">
    <interactant intactId="EBI-6985725">
        <id>Q8CJ26</id>
    </interactant>
    <interactant intactId="EBI-6985663">
        <id>Q6PHU5</id>
        <label>Sort1</label>
    </interactant>
    <organismsDiffer>false</organismsDiffer>
    <experiments>5</experiments>
</comment>
<comment type="subcellular location">
    <subcellularLocation>
        <location>Cell membrane</location>
        <topology>Single-pass type III membrane protein</topology>
    </subcellularLocation>
    <subcellularLocation>
        <location>Nucleus</location>
    </subcellularLocation>
    <text>Proteolytic processing gives rise to an intracellular domain that translocates to the nucleus.</text>
</comment>
<comment type="tissue specificity">
    <text>Detected in lung and testis.</text>
</comment>
<protein>
    <recommendedName>
        <fullName>Death domain-containing membrane protein NRADD</fullName>
    </recommendedName>
    <alternativeName>
        <fullName>Neurotrophin receptor homolog-2</fullName>
        <shortName>NRH2</shortName>
    </alternativeName>
    <alternativeName>
        <fullName>Neurotrophin receptor-alike death domain protein</fullName>
    </alternativeName>
</protein>
<reference key="1">
    <citation type="journal article" date="2003" name="Cell Death Differ.">
        <title>NRADD, a novel membrane protein with a death domain involved in mediating apoptosis in response to ER stress.</title>
        <authorList>
            <person name="Wang X."/>
            <person name="Shao Z."/>
            <person name="Zetoune F.S."/>
            <person name="Zeidler M.G."/>
            <person name="Gowrishankar K."/>
            <person name="Vincenz C."/>
        </authorList>
    </citation>
    <scope>NUCLEOTIDE SEQUENCE [MRNA]</scope>
    <scope>FUNCTION</scope>
    <scope>SUBCELLULAR LOCATION</scope>
    <scope>GLYCOSYLATION</scope>
    <source>
        <strain>C57BL/6J</strain>
    </source>
</reference>
<reference key="2">
    <citation type="journal article" date="2005" name="Science">
        <title>The transcriptional landscape of the mammalian genome.</title>
        <authorList>
            <person name="Carninci P."/>
            <person name="Kasukawa T."/>
            <person name="Katayama S."/>
            <person name="Gough J."/>
            <person name="Frith M.C."/>
            <person name="Maeda N."/>
            <person name="Oyama R."/>
            <person name="Ravasi T."/>
            <person name="Lenhard B."/>
            <person name="Wells C."/>
            <person name="Kodzius R."/>
            <person name="Shimokawa K."/>
            <person name="Bajic V.B."/>
            <person name="Brenner S.E."/>
            <person name="Batalov S."/>
            <person name="Forrest A.R."/>
            <person name="Zavolan M."/>
            <person name="Davis M.J."/>
            <person name="Wilming L.G."/>
            <person name="Aidinis V."/>
            <person name="Allen J.E."/>
            <person name="Ambesi-Impiombato A."/>
            <person name="Apweiler R."/>
            <person name="Aturaliya R.N."/>
            <person name="Bailey T.L."/>
            <person name="Bansal M."/>
            <person name="Baxter L."/>
            <person name="Beisel K.W."/>
            <person name="Bersano T."/>
            <person name="Bono H."/>
            <person name="Chalk A.M."/>
            <person name="Chiu K.P."/>
            <person name="Choudhary V."/>
            <person name="Christoffels A."/>
            <person name="Clutterbuck D.R."/>
            <person name="Crowe M.L."/>
            <person name="Dalla E."/>
            <person name="Dalrymple B.P."/>
            <person name="de Bono B."/>
            <person name="Della Gatta G."/>
            <person name="di Bernardo D."/>
            <person name="Down T."/>
            <person name="Engstrom P."/>
            <person name="Fagiolini M."/>
            <person name="Faulkner G."/>
            <person name="Fletcher C.F."/>
            <person name="Fukushima T."/>
            <person name="Furuno M."/>
            <person name="Futaki S."/>
            <person name="Gariboldi M."/>
            <person name="Georgii-Hemming P."/>
            <person name="Gingeras T.R."/>
            <person name="Gojobori T."/>
            <person name="Green R.E."/>
            <person name="Gustincich S."/>
            <person name="Harbers M."/>
            <person name="Hayashi Y."/>
            <person name="Hensch T.K."/>
            <person name="Hirokawa N."/>
            <person name="Hill D."/>
            <person name="Huminiecki L."/>
            <person name="Iacono M."/>
            <person name="Ikeo K."/>
            <person name="Iwama A."/>
            <person name="Ishikawa T."/>
            <person name="Jakt M."/>
            <person name="Kanapin A."/>
            <person name="Katoh M."/>
            <person name="Kawasawa Y."/>
            <person name="Kelso J."/>
            <person name="Kitamura H."/>
            <person name="Kitano H."/>
            <person name="Kollias G."/>
            <person name="Krishnan S.P."/>
            <person name="Kruger A."/>
            <person name="Kummerfeld S.K."/>
            <person name="Kurochkin I.V."/>
            <person name="Lareau L.F."/>
            <person name="Lazarevic D."/>
            <person name="Lipovich L."/>
            <person name="Liu J."/>
            <person name="Liuni S."/>
            <person name="McWilliam S."/>
            <person name="Madan Babu M."/>
            <person name="Madera M."/>
            <person name="Marchionni L."/>
            <person name="Matsuda H."/>
            <person name="Matsuzawa S."/>
            <person name="Miki H."/>
            <person name="Mignone F."/>
            <person name="Miyake S."/>
            <person name="Morris K."/>
            <person name="Mottagui-Tabar S."/>
            <person name="Mulder N."/>
            <person name="Nakano N."/>
            <person name="Nakauchi H."/>
            <person name="Ng P."/>
            <person name="Nilsson R."/>
            <person name="Nishiguchi S."/>
            <person name="Nishikawa S."/>
            <person name="Nori F."/>
            <person name="Ohara O."/>
            <person name="Okazaki Y."/>
            <person name="Orlando V."/>
            <person name="Pang K.C."/>
            <person name="Pavan W.J."/>
            <person name="Pavesi G."/>
            <person name="Pesole G."/>
            <person name="Petrovsky N."/>
            <person name="Piazza S."/>
            <person name="Reed J."/>
            <person name="Reid J.F."/>
            <person name="Ring B.Z."/>
            <person name="Ringwald M."/>
            <person name="Rost B."/>
            <person name="Ruan Y."/>
            <person name="Salzberg S.L."/>
            <person name="Sandelin A."/>
            <person name="Schneider C."/>
            <person name="Schoenbach C."/>
            <person name="Sekiguchi K."/>
            <person name="Semple C.A."/>
            <person name="Seno S."/>
            <person name="Sessa L."/>
            <person name="Sheng Y."/>
            <person name="Shibata Y."/>
            <person name="Shimada H."/>
            <person name="Shimada K."/>
            <person name="Silva D."/>
            <person name="Sinclair B."/>
            <person name="Sperling S."/>
            <person name="Stupka E."/>
            <person name="Sugiura K."/>
            <person name="Sultana R."/>
            <person name="Takenaka Y."/>
            <person name="Taki K."/>
            <person name="Tammoja K."/>
            <person name="Tan S.L."/>
            <person name="Tang S."/>
            <person name="Taylor M.S."/>
            <person name="Tegner J."/>
            <person name="Teichmann S.A."/>
            <person name="Ueda H.R."/>
            <person name="van Nimwegen E."/>
            <person name="Verardo R."/>
            <person name="Wei C.L."/>
            <person name="Yagi K."/>
            <person name="Yamanishi H."/>
            <person name="Zabarovsky E."/>
            <person name="Zhu S."/>
            <person name="Zimmer A."/>
            <person name="Hide W."/>
            <person name="Bult C."/>
            <person name="Grimmond S.M."/>
            <person name="Teasdale R.D."/>
            <person name="Liu E.T."/>
            <person name="Brusic V."/>
            <person name="Quackenbush J."/>
            <person name="Wahlestedt C."/>
            <person name="Mattick J.S."/>
            <person name="Hume D.A."/>
            <person name="Kai C."/>
            <person name="Sasaki D."/>
            <person name="Tomaru Y."/>
            <person name="Fukuda S."/>
            <person name="Kanamori-Katayama M."/>
            <person name="Suzuki M."/>
            <person name="Aoki J."/>
            <person name="Arakawa T."/>
            <person name="Iida J."/>
            <person name="Imamura K."/>
            <person name="Itoh M."/>
            <person name="Kato T."/>
            <person name="Kawaji H."/>
            <person name="Kawagashira N."/>
            <person name="Kawashima T."/>
            <person name="Kojima M."/>
            <person name="Kondo S."/>
            <person name="Konno H."/>
            <person name="Nakano K."/>
            <person name="Ninomiya N."/>
            <person name="Nishio T."/>
            <person name="Okada M."/>
            <person name="Plessy C."/>
            <person name="Shibata K."/>
            <person name="Shiraki T."/>
            <person name="Suzuki S."/>
            <person name="Tagami M."/>
            <person name="Waki K."/>
            <person name="Watahiki A."/>
            <person name="Okamura-Oho Y."/>
            <person name="Suzuki H."/>
            <person name="Kawai J."/>
            <person name="Hayashizaki Y."/>
        </authorList>
    </citation>
    <scope>NUCLEOTIDE SEQUENCE [LARGE SCALE MRNA]</scope>
    <source>
        <strain>C57BL/6J</strain>
        <tissue>Embryo</tissue>
    </source>
</reference>
<reference key="3">
    <citation type="journal article" date="2009" name="PLoS Biol.">
        <title>Lineage-specific biology revealed by a finished genome assembly of the mouse.</title>
        <authorList>
            <person name="Church D.M."/>
            <person name="Goodstadt L."/>
            <person name="Hillier L.W."/>
            <person name="Zody M.C."/>
            <person name="Goldstein S."/>
            <person name="She X."/>
            <person name="Bult C.J."/>
            <person name="Agarwala R."/>
            <person name="Cherry J.L."/>
            <person name="DiCuccio M."/>
            <person name="Hlavina W."/>
            <person name="Kapustin Y."/>
            <person name="Meric P."/>
            <person name="Maglott D."/>
            <person name="Birtle Z."/>
            <person name="Marques A.C."/>
            <person name="Graves T."/>
            <person name="Zhou S."/>
            <person name="Teague B."/>
            <person name="Potamousis K."/>
            <person name="Churas C."/>
            <person name="Place M."/>
            <person name="Herschleb J."/>
            <person name="Runnheim R."/>
            <person name="Forrest D."/>
            <person name="Amos-Landgraf J."/>
            <person name="Schwartz D.C."/>
            <person name="Cheng Z."/>
            <person name="Lindblad-Toh K."/>
            <person name="Eichler E.E."/>
            <person name="Ponting C.P."/>
        </authorList>
    </citation>
    <scope>NUCLEOTIDE SEQUENCE [LARGE SCALE GENOMIC DNA]</scope>
    <source>
        <strain>C57BL/6J</strain>
    </source>
</reference>
<reference key="4">
    <citation type="journal article" date="2004" name="Genome Res.">
        <title>The status, quality, and expansion of the NIH full-length cDNA project: the Mammalian Gene Collection (MGC).</title>
        <authorList>
            <consortium name="The MGC Project Team"/>
        </authorList>
    </citation>
    <scope>NUCLEOTIDE SEQUENCE [LARGE SCALE MRNA]</scope>
    <source>
        <tissue>Eye</tissue>
    </source>
</reference>
<reference key="5">
    <citation type="journal article" date="2003" name="J. Neurosci.">
        <title>Proteolytic processing of the p75 neurotrophin receptor and two homologs generates C-terminal fragments with signaling capability.</title>
        <authorList>
            <person name="Kanning K.C."/>
            <person name="Hudson M."/>
            <person name="Amieux P.S."/>
            <person name="Wiley J.C."/>
            <person name="Bothwell M."/>
            <person name="Schecterson L.C."/>
        </authorList>
    </citation>
    <scope>FUNCTION</scope>
    <scope>GLYCOSYLATION</scope>
    <scope>PROTEOLYTIC PROCESSING</scope>
    <scope>SUBCELLULAR LOCATION</scope>
</reference>
<reference key="6">
    <citation type="journal article" date="2008" name="J. Neurochem.">
        <title>Neurotrophin receptor homolog-2 regulates nerve growth factor signaling.</title>
        <authorList>
            <person name="Wong A.W."/>
            <person name="Willingham M."/>
            <person name="Xiao J."/>
            <person name="Kilpatrick T.J."/>
            <person name="Murray S.S."/>
        </authorList>
    </citation>
    <scope>INTERACTION WITH NTRK1</scope>
</reference>
<reference key="7">
    <citation type="journal article" date="2009" name="EMBO J.">
        <title>NRH2 is a trafficking switch to regulate sortilin localization and permit proneurotrophin-induced cell death.</title>
        <authorList>
            <person name="Kim T."/>
            <person name="Hempstead B.L."/>
        </authorList>
    </citation>
    <scope>FUNCTION</scope>
    <scope>INTERACTION WITH NGFR AND SORT1</scope>
    <scope>SUBCELLULAR LOCATION</scope>
    <scope>GLYCOSYLATION</scope>
</reference>
<reference key="8">
    <citation type="journal article" date="2009" name="Mol. Cell. Proteomics">
        <title>The mouse C2C12 myoblast cell surface N-linked glycoproteome: identification, glycosite occupancy, and membrane orientation.</title>
        <authorList>
            <person name="Gundry R.L."/>
            <person name="Raginski K."/>
            <person name="Tarasova Y."/>
            <person name="Tchernyshyov I."/>
            <person name="Bausch-Fluck D."/>
            <person name="Elliott S.T."/>
            <person name="Boheler K.R."/>
            <person name="Van Eyk J.E."/>
            <person name="Wollscheid B."/>
        </authorList>
    </citation>
    <scope>GLYCOSYLATION [LARGE SCALE ANALYSIS] AT ASN-4</scope>
    <source>
        <tissue>Myoblast</tissue>
    </source>
</reference>
<reference key="9">
    <citation type="submission" date="2006-09" db="PDB data bank">
        <title>Solution structure of p45 death domain.</title>
        <authorList>
            <person name="Vilar M."/>
            <person name="Sung T.C."/>
            <person name="Lee K.F."/>
            <person name="Riek R."/>
        </authorList>
    </citation>
    <scope>STRUCTURE BY NMR OF 138-228</scope>
</reference>
<gene>
    <name type="primary">Nradd</name>
</gene>
<accession>Q8CJ26</accession>
<accession>Q3TVC1</accession>
<proteinExistence type="evidence at protein level"/>
<name>NRADD_MOUSE</name>
<evidence type="ECO:0000255" key="1"/>
<evidence type="ECO:0000255" key="2">
    <source>
        <dbReference type="PROSITE-ProRule" id="PRU00064"/>
    </source>
</evidence>
<evidence type="ECO:0000256" key="3">
    <source>
        <dbReference type="SAM" id="MobiDB-lite"/>
    </source>
</evidence>
<evidence type="ECO:0000269" key="4">
    <source>
    </source>
</evidence>
<evidence type="ECO:0000269" key="5">
    <source>
    </source>
</evidence>
<evidence type="ECO:0000269" key="6">
    <source>
    </source>
</evidence>
<evidence type="ECO:0000269" key="7">
    <source>
    </source>
</evidence>
<evidence type="ECO:0000269" key="8">
    <source>
    </source>
</evidence>
<evidence type="ECO:0000305" key="9"/>
<evidence type="ECO:0007829" key="10">
    <source>
        <dbReference type="PDB" id="2IB1"/>
    </source>
</evidence>
<evidence type="ECO:0007829" key="11">
    <source>
        <dbReference type="PDB" id="6HJ7"/>
    </source>
</evidence>
<sequence length="228" mass="24727">MLYNVSKGVVYSDTALQGQDGDREGMWVGAGGALAPNTSSLFPPEPPGASSNIIPVYCALLATVILGLLAYVAFKCWRSHKQRQQLAKARTVELGDPDRDQRRGDSNVFVDSPPSLEPCIPSQGPHPDLGCQLYLHIPQQQQEEVQRLLMMGEPAKGWQELAGHLGYQAEAVETMACDQMPAYTLLRNWAAQEGNRATLRVLEDALAAIGREDVVQVLSSPAESSSVV</sequence>